<proteinExistence type="inferred from homology"/>
<protein>
    <recommendedName>
        <fullName evidence="1">Exodeoxyribonuclease 7 small subunit</fullName>
        <ecNumber evidence="1">3.1.11.6</ecNumber>
    </recommendedName>
    <alternativeName>
        <fullName evidence="1">Exodeoxyribonuclease VII small subunit</fullName>
        <shortName evidence="1">Exonuclease VII small subunit</shortName>
    </alternativeName>
</protein>
<reference key="1">
    <citation type="submission" date="2008-10" db="EMBL/GenBank/DDBJ databases">
        <title>Genome sequence of Bacillus cereus AH820.</title>
        <authorList>
            <person name="Dodson R.J."/>
            <person name="Durkin A.S."/>
            <person name="Rosovitz M.J."/>
            <person name="Rasko D.A."/>
            <person name="Hoffmaster A."/>
            <person name="Ravel J."/>
            <person name="Sutton G."/>
        </authorList>
    </citation>
    <scope>NUCLEOTIDE SEQUENCE [LARGE SCALE GENOMIC DNA]</scope>
    <source>
        <strain>AH820</strain>
    </source>
</reference>
<evidence type="ECO:0000255" key="1">
    <source>
        <dbReference type="HAMAP-Rule" id="MF_00337"/>
    </source>
</evidence>
<sequence>MENKLSFEEAISQLEHLVSKLEQGDVPLEEAISYFKEGMELSKLCDEKLKNVQEQMAVILGEDGELEPFTALGDEA</sequence>
<accession>B7JM30</accession>
<organism>
    <name type="scientific">Bacillus cereus (strain AH820)</name>
    <dbReference type="NCBI Taxonomy" id="405535"/>
    <lineage>
        <taxon>Bacteria</taxon>
        <taxon>Bacillati</taxon>
        <taxon>Bacillota</taxon>
        <taxon>Bacilli</taxon>
        <taxon>Bacillales</taxon>
        <taxon>Bacillaceae</taxon>
        <taxon>Bacillus</taxon>
        <taxon>Bacillus cereus group</taxon>
    </lineage>
</organism>
<name>EX7S_BACC0</name>
<gene>
    <name evidence="1" type="primary">xseB</name>
    <name type="ordered locus">BCAH820_4199</name>
</gene>
<feature type="chain" id="PRO_1000119897" description="Exodeoxyribonuclease 7 small subunit">
    <location>
        <begin position="1"/>
        <end position="76"/>
    </location>
</feature>
<comment type="function">
    <text evidence="1">Bidirectionally degrades single-stranded DNA into large acid-insoluble oligonucleotides, which are then degraded further into small acid-soluble oligonucleotides.</text>
</comment>
<comment type="catalytic activity">
    <reaction evidence="1">
        <text>Exonucleolytic cleavage in either 5'- to 3'- or 3'- to 5'-direction to yield nucleoside 5'-phosphates.</text>
        <dbReference type="EC" id="3.1.11.6"/>
    </reaction>
</comment>
<comment type="subunit">
    <text evidence="1">Heterooligomer composed of large and small subunits.</text>
</comment>
<comment type="subcellular location">
    <subcellularLocation>
        <location evidence="1">Cytoplasm</location>
    </subcellularLocation>
</comment>
<comment type="similarity">
    <text evidence="1">Belongs to the XseB family.</text>
</comment>
<dbReference type="EC" id="3.1.11.6" evidence="1"/>
<dbReference type="EMBL" id="CP001283">
    <property type="protein sequence ID" value="ACK89967.1"/>
    <property type="molecule type" value="Genomic_DNA"/>
</dbReference>
<dbReference type="RefSeq" id="WP_000428423.1">
    <property type="nucleotide sequence ID" value="NC_011773.1"/>
</dbReference>
<dbReference type="SMR" id="B7JM30"/>
<dbReference type="GeneID" id="93006923"/>
<dbReference type="KEGG" id="bcu:BCAH820_4199"/>
<dbReference type="HOGENOM" id="CLU_145918_3_1_9"/>
<dbReference type="Proteomes" id="UP000001363">
    <property type="component" value="Chromosome"/>
</dbReference>
<dbReference type="GO" id="GO:0005829">
    <property type="term" value="C:cytosol"/>
    <property type="evidence" value="ECO:0007669"/>
    <property type="project" value="TreeGrafter"/>
</dbReference>
<dbReference type="GO" id="GO:0009318">
    <property type="term" value="C:exodeoxyribonuclease VII complex"/>
    <property type="evidence" value="ECO:0007669"/>
    <property type="project" value="InterPro"/>
</dbReference>
<dbReference type="GO" id="GO:0008855">
    <property type="term" value="F:exodeoxyribonuclease VII activity"/>
    <property type="evidence" value="ECO:0007669"/>
    <property type="project" value="UniProtKB-UniRule"/>
</dbReference>
<dbReference type="GO" id="GO:0006308">
    <property type="term" value="P:DNA catabolic process"/>
    <property type="evidence" value="ECO:0007669"/>
    <property type="project" value="UniProtKB-UniRule"/>
</dbReference>
<dbReference type="FunFam" id="1.10.287.1040:FF:000002">
    <property type="entry name" value="Exodeoxyribonuclease 7 small subunit"/>
    <property type="match status" value="1"/>
</dbReference>
<dbReference type="Gene3D" id="1.10.287.1040">
    <property type="entry name" value="Exonuclease VII, small subunit"/>
    <property type="match status" value="1"/>
</dbReference>
<dbReference type="HAMAP" id="MF_00337">
    <property type="entry name" value="Exonuc_7_S"/>
    <property type="match status" value="1"/>
</dbReference>
<dbReference type="InterPro" id="IPR003761">
    <property type="entry name" value="Exonuc_VII_S"/>
</dbReference>
<dbReference type="InterPro" id="IPR037004">
    <property type="entry name" value="Exonuc_VII_ssu_sf"/>
</dbReference>
<dbReference type="NCBIfam" id="NF010666">
    <property type="entry name" value="PRK14063.1"/>
    <property type="match status" value="1"/>
</dbReference>
<dbReference type="NCBIfam" id="TIGR01280">
    <property type="entry name" value="xseB"/>
    <property type="match status" value="1"/>
</dbReference>
<dbReference type="PANTHER" id="PTHR34137">
    <property type="entry name" value="EXODEOXYRIBONUCLEASE 7 SMALL SUBUNIT"/>
    <property type="match status" value="1"/>
</dbReference>
<dbReference type="PANTHER" id="PTHR34137:SF1">
    <property type="entry name" value="EXODEOXYRIBONUCLEASE 7 SMALL SUBUNIT"/>
    <property type="match status" value="1"/>
</dbReference>
<dbReference type="Pfam" id="PF02609">
    <property type="entry name" value="Exonuc_VII_S"/>
    <property type="match status" value="1"/>
</dbReference>
<dbReference type="PIRSF" id="PIRSF006488">
    <property type="entry name" value="Exonuc_VII_S"/>
    <property type="match status" value="1"/>
</dbReference>
<dbReference type="SUPFAM" id="SSF116842">
    <property type="entry name" value="XseB-like"/>
    <property type="match status" value="1"/>
</dbReference>
<keyword id="KW-0963">Cytoplasm</keyword>
<keyword id="KW-0269">Exonuclease</keyword>
<keyword id="KW-0378">Hydrolase</keyword>
<keyword id="KW-0540">Nuclease</keyword>